<reference key="1">
    <citation type="journal article" date="1988" name="Gene">
        <title>Cloning and nucleotide sequence of a cellulase gene, casA, from an alkalophilic Streptomyces strain.</title>
        <authorList>
            <person name="Nakai R."/>
            <person name="Horinouchi S."/>
            <person name="Beppu T."/>
        </authorList>
    </citation>
    <scope>NUCLEOTIDE SEQUENCE [GENOMIC DNA]</scope>
    <scope>PROTEIN SEQUENCE OF 71-95</scope>
</reference>
<reference key="2">
    <citation type="journal article" date="1993" name="Gene">
        <title>Endoglucanase CasA from alkalophilic Streptomyces strain KSM-9 is a typical member of family B of beta-1,4-glucanases.</title>
        <authorList>
            <person name="Damude H.G."/>
            <person name="Gilkes N.R."/>
            <person name="Kilburn D.G."/>
            <person name="Miller R.C. Jr."/>
            <person name="Warren R.A."/>
        </authorList>
    </citation>
    <scope>NUCLEOTIDE SEQUENCE [GENOMIC DNA]</scope>
    <scope>SEQUENCE REVISION</scope>
</reference>
<reference key="3">
    <citation type="journal article" date="1991" name="Eur. J. Biochem.">
        <title>Structural and functional relationships in two families of beta-1,4-glycanases.</title>
        <authorList>
            <person name="Gilkes N.R."/>
            <person name="Claeyssens M."/>
            <person name="Aebersold R."/>
            <person name="Henrissat B."/>
            <person name="Meinke A."/>
            <person name="Morrison H.D."/>
            <person name="Kilburn D.G."/>
            <person name="Warren R.A.J."/>
            <person name="Miller R.C. Jr."/>
        </authorList>
    </citation>
    <scope>PROTEIN SEQUENCE OF 185-222</scope>
    <scope>SEQUENCE REVISION</scope>
</reference>
<keyword id="KW-0119">Carbohydrate metabolism</keyword>
<keyword id="KW-0136">Cellulose degradation</keyword>
<keyword id="KW-0903">Direct protein sequencing</keyword>
<keyword id="KW-1015">Disulfide bond</keyword>
<keyword id="KW-0326">Glycosidase</keyword>
<keyword id="KW-0378">Hydrolase</keyword>
<keyword id="KW-0624">Polysaccharide degradation</keyword>
<keyword id="KW-0732">Signal</keyword>
<evidence type="ECO:0000250" key="1"/>
<evidence type="ECO:0000255" key="2">
    <source>
        <dbReference type="PROSITE-ProRule" id="PRU10056"/>
    </source>
</evidence>
<evidence type="ECO:0000255" key="3">
    <source>
        <dbReference type="PROSITE-ProRule" id="PRU10057"/>
    </source>
</evidence>
<evidence type="ECO:0000256" key="4">
    <source>
        <dbReference type="SAM" id="MobiDB-lite"/>
    </source>
</evidence>
<evidence type="ECO:0000269" key="5">
    <source>
    </source>
</evidence>
<evidence type="ECO:0000305" key="6"/>
<name>GUN1_STRSS</name>
<protein>
    <recommendedName>
        <fullName>Endoglucanase 1</fullName>
        <ecNumber>3.2.1.4</ecNumber>
    </recommendedName>
    <alternativeName>
        <fullName>CMCase I</fullName>
    </alternativeName>
    <alternativeName>
        <fullName>Carboxymethyl cellulase</fullName>
    </alternativeName>
    <alternativeName>
        <fullName>Cellulase</fullName>
    </alternativeName>
    <alternativeName>
        <fullName>Endo-1,4-beta-glucanase</fullName>
    </alternativeName>
</protein>
<sequence>MENPRTTPTPTPLRRRRSERRARGGRVLTALTGVTLLAGLAIAPAATGASPSPAPPASPAPSADSGTADAGTTALPSMELYRAEAGVHAWLDANPGDHRAPLIAERIGSQPQAVWFAGAYNPGTITQQVAEVTSAAAAAGQLPVVVPYMIPFRDCGNHSGGGAPSFAAYAEWSGLFAAGLGSEPVVVVLEPDAIPLIDCLDNQQRAERLAALAGLAEAVTDANPEARVYYDVGHSAWHAPAAIAPTLVEAGILEHGAGIATNISNYRTTTDETAYASAVIAELGGGLGAVVDTSRNGNGPLGSEWCDPPGRLVGNNPTVNPGVPGVDAFLWIKLPGELDGCDGPVGSFSPAKAYELAGG</sequence>
<gene>
    <name type="primary">casA</name>
</gene>
<comment type="function">
    <text>CMCase I preferentially hydrolyzes carboxymethyl cellulose (CMC).</text>
</comment>
<comment type="catalytic activity">
    <reaction>
        <text>Endohydrolysis of (1-&gt;4)-beta-D-glucosidic linkages in cellulose, lichenin and cereal beta-D-glucans.</text>
        <dbReference type="EC" id="3.2.1.4"/>
    </reaction>
</comment>
<comment type="biophysicochemical properties">
    <phDependence>
        <text>Optimum pH is 8.5.</text>
    </phDependence>
</comment>
<comment type="similarity">
    <text evidence="6">Belongs to the glycosyl hydrolase 6 (cellulase B) family.</text>
</comment>
<accession>P13933</accession>
<organism>
    <name type="scientific">Streptomyces sp. (strain KSM-9)</name>
    <dbReference type="NCBI Taxonomy" id="74575"/>
    <lineage>
        <taxon>Bacteria</taxon>
        <taxon>Bacillati</taxon>
        <taxon>Actinomycetota</taxon>
        <taxon>Actinomycetes</taxon>
        <taxon>Kitasatosporales</taxon>
        <taxon>Streptomycetaceae</taxon>
        <taxon>Streptomyces</taxon>
    </lineage>
</organism>
<proteinExistence type="evidence at protein level"/>
<feature type="signal peptide">
    <location>
        <begin position="1"/>
        <end status="unknown"/>
    </location>
</feature>
<feature type="propeptide" id="PRO_0000007907" evidence="5">
    <location>
        <begin status="unknown"/>
        <end position="70"/>
    </location>
</feature>
<feature type="chain" id="PRO_0000007908" description="Endoglucanase 1">
    <location>
        <begin position="71"/>
        <end position="359"/>
    </location>
</feature>
<feature type="region of interest" description="Disordered" evidence="4">
    <location>
        <begin position="1"/>
        <end position="26"/>
    </location>
</feature>
<feature type="region of interest" description="Disordered" evidence="4">
    <location>
        <begin position="47"/>
        <end position="72"/>
    </location>
</feature>
<feature type="compositionally biased region" description="Basic residues" evidence="4">
    <location>
        <begin position="13"/>
        <end position="24"/>
    </location>
</feature>
<feature type="compositionally biased region" description="Low complexity" evidence="4">
    <location>
        <begin position="60"/>
        <end position="72"/>
    </location>
</feature>
<feature type="active site" evidence="2">
    <location>
        <position position="154"/>
    </location>
</feature>
<feature type="active site" description="Proton donor" evidence="3">
    <location>
        <position position="192"/>
    </location>
</feature>
<feature type="active site" description="Nucleophile" evidence="2">
    <location>
        <position position="339"/>
    </location>
</feature>
<feature type="disulfide bond" evidence="1">
    <location>
        <begin position="155"/>
        <end position="199"/>
    </location>
</feature>
<dbReference type="EC" id="3.2.1.4"/>
<dbReference type="EMBL" id="L03218">
    <property type="protein sequence ID" value="AAA26713.1"/>
    <property type="molecule type" value="Genomic_DNA"/>
</dbReference>
<dbReference type="EMBL" id="X61008">
    <property type="protein sequence ID" value="CAA43330.1"/>
    <property type="molecule type" value="Genomic_DNA"/>
</dbReference>
<dbReference type="EMBL" id="M20921">
    <property type="protein sequence ID" value="AAA26776.1"/>
    <property type="status" value="ALT_SEQ"/>
    <property type="molecule type" value="Genomic_DNA"/>
</dbReference>
<dbReference type="PIR" id="JN0544">
    <property type="entry name" value="JN0544"/>
</dbReference>
<dbReference type="PIR" id="JT0308">
    <property type="entry name" value="JT0308"/>
</dbReference>
<dbReference type="SMR" id="P13933"/>
<dbReference type="CAZy" id="GH6">
    <property type="family name" value="Glycoside Hydrolase Family 6"/>
</dbReference>
<dbReference type="GO" id="GO:0008810">
    <property type="term" value="F:cellulase activity"/>
    <property type="evidence" value="ECO:0007669"/>
    <property type="project" value="UniProtKB-EC"/>
</dbReference>
<dbReference type="GO" id="GO:0030245">
    <property type="term" value="P:cellulose catabolic process"/>
    <property type="evidence" value="ECO:0007669"/>
    <property type="project" value="UniProtKB-KW"/>
</dbReference>
<dbReference type="Gene3D" id="3.20.20.40">
    <property type="entry name" value="1, 4-beta cellobiohydrolase"/>
    <property type="match status" value="1"/>
</dbReference>
<dbReference type="InterPro" id="IPR016288">
    <property type="entry name" value="Beta_cellobiohydrolase"/>
</dbReference>
<dbReference type="InterPro" id="IPR036434">
    <property type="entry name" value="Beta_cellobiohydrolase_sf"/>
</dbReference>
<dbReference type="InterPro" id="IPR001524">
    <property type="entry name" value="Glyco_hydro_6_CS"/>
</dbReference>
<dbReference type="PANTHER" id="PTHR34876">
    <property type="match status" value="1"/>
</dbReference>
<dbReference type="PANTHER" id="PTHR34876:SF4">
    <property type="entry name" value="1,4-BETA-D-GLUCAN CELLOBIOHYDROLASE C-RELATED"/>
    <property type="match status" value="1"/>
</dbReference>
<dbReference type="Pfam" id="PF01341">
    <property type="entry name" value="Glyco_hydro_6"/>
    <property type="match status" value="1"/>
</dbReference>
<dbReference type="PIRSF" id="PIRSF001100">
    <property type="entry name" value="Beta_cellobiohydrolase"/>
    <property type="match status" value="1"/>
</dbReference>
<dbReference type="PRINTS" id="PR00733">
    <property type="entry name" value="GLHYDRLASE6"/>
</dbReference>
<dbReference type="SUPFAM" id="SSF51989">
    <property type="entry name" value="Glycosyl hydrolases family 6, cellulases"/>
    <property type="match status" value="1"/>
</dbReference>
<dbReference type="PROSITE" id="PS00655">
    <property type="entry name" value="GLYCOSYL_HYDROL_F6_1"/>
    <property type="match status" value="1"/>
</dbReference>
<dbReference type="PROSITE" id="PS00656">
    <property type="entry name" value="GLYCOSYL_HYDROL_F6_2"/>
    <property type="match status" value="1"/>
</dbReference>